<organism>
    <name type="scientific">Escherichia coli O7:K1 (strain IAI39 / ExPEC)</name>
    <dbReference type="NCBI Taxonomy" id="585057"/>
    <lineage>
        <taxon>Bacteria</taxon>
        <taxon>Pseudomonadati</taxon>
        <taxon>Pseudomonadota</taxon>
        <taxon>Gammaproteobacteria</taxon>
        <taxon>Enterobacterales</taxon>
        <taxon>Enterobacteriaceae</taxon>
        <taxon>Escherichia</taxon>
    </lineage>
</organism>
<name>RL1_ECO7I</name>
<comment type="function">
    <text evidence="1">Binds directly to 23S rRNA. The L1 stalk is quite mobile in the ribosome, and is involved in E site tRNA release.</text>
</comment>
<comment type="function">
    <text evidence="1">Protein L1 is also a translational repressor protein, it controls the translation of the L11 operon by binding to its mRNA.</text>
</comment>
<comment type="subunit">
    <text evidence="1">Part of the 50S ribosomal subunit.</text>
</comment>
<comment type="similarity">
    <text evidence="1">Belongs to the universal ribosomal protein uL1 family.</text>
</comment>
<gene>
    <name evidence="1" type="primary">rplA</name>
    <name type="ordered locus">ECIAI39_4369</name>
</gene>
<feature type="chain" id="PRO_1000141398" description="Large ribosomal subunit protein uL1">
    <location>
        <begin position="1"/>
        <end position="234"/>
    </location>
</feature>
<protein>
    <recommendedName>
        <fullName evidence="1">Large ribosomal subunit protein uL1</fullName>
    </recommendedName>
    <alternativeName>
        <fullName evidence="2">50S ribosomal protein L1</fullName>
    </alternativeName>
</protein>
<dbReference type="EMBL" id="CU928164">
    <property type="protein sequence ID" value="CAR20475.1"/>
    <property type="molecule type" value="Genomic_DNA"/>
</dbReference>
<dbReference type="RefSeq" id="WP_001096684.1">
    <property type="nucleotide sequence ID" value="NC_011750.1"/>
</dbReference>
<dbReference type="RefSeq" id="YP_002410243.1">
    <property type="nucleotide sequence ID" value="NC_011750.1"/>
</dbReference>
<dbReference type="SMR" id="B7NRR2"/>
<dbReference type="STRING" id="585057.ECIAI39_4369"/>
<dbReference type="GeneID" id="93777910"/>
<dbReference type="KEGG" id="ect:ECIAI39_4369"/>
<dbReference type="PATRIC" id="fig|585057.6.peg.4515"/>
<dbReference type="HOGENOM" id="CLU_062853_0_0_6"/>
<dbReference type="Proteomes" id="UP000000749">
    <property type="component" value="Chromosome"/>
</dbReference>
<dbReference type="GO" id="GO:0022625">
    <property type="term" value="C:cytosolic large ribosomal subunit"/>
    <property type="evidence" value="ECO:0007669"/>
    <property type="project" value="TreeGrafter"/>
</dbReference>
<dbReference type="GO" id="GO:0019843">
    <property type="term" value="F:rRNA binding"/>
    <property type="evidence" value="ECO:0007669"/>
    <property type="project" value="UniProtKB-UniRule"/>
</dbReference>
<dbReference type="GO" id="GO:0003735">
    <property type="term" value="F:structural constituent of ribosome"/>
    <property type="evidence" value="ECO:0007669"/>
    <property type="project" value="InterPro"/>
</dbReference>
<dbReference type="GO" id="GO:0000049">
    <property type="term" value="F:tRNA binding"/>
    <property type="evidence" value="ECO:0007669"/>
    <property type="project" value="UniProtKB-KW"/>
</dbReference>
<dbReference type="GO" id="GO:0006417">
    <property type="term" value="P:regulation of translation"/>
    <property type="evidence" value="ECO:0007669"/>
    <property type="project" value="UniProtKB-KW"/>
</dbReference>
<dbReference type="GO" id="GO:0006412">
    <property type="term" value="P:translation"/>
    <property type="evidence" value="ECO:0007669"/>
    <property type="project" value="UniProtKB-UniRule"/>
</dbReference>
<dbReference type="CDD" id="cd00403">
    <property type="entry name" value="Ribosomal_L1"/>
    <property type="match status" value="1"/>
</dbReference>
<dbReference type="FunFam" id="3.40.50.790:FF:000001">
    <property type="entry name" value="50S ribosomal protein L1"/>
    <property type="match status" value="1"/>
</dbReference>
<dbReference type="Gene3D" id="3.30.190.20">
    <property type="match status" value="1"/>
</dbReference>
<dbReference type="Gene3D" id="3.40.50.790">
    <property type="match status" value="1"/>
</dbReference>
<dbReference type="HAMAP" id="MF_01318_B">
    <property type="entry name" value="Ribosomal_uL1_B"/>
    <property type="match status" value="1"/>
</dbReference>
<dbReference type="InterPro" id="IPR005878">
    <property type="entry name" value="Ribosom_uL1_bac-type"/>
</dbReference>
<dbReference type="InterPro" id="IPR002143">
    <property type="entry name" value="Ribosomal_uL1"/>
</dbReference>
<dbReference type="InterPro" id="IPR023674">
    <property type="entry name" value="Ribosomal_uL1-like"/>
</dbReference>
<dbReference type="InterPro" id="IPR028364">
    <property type="entry name" value="Ribosomal_uL1/biogenesis"/>
</dbReference>
<dbReference type="InterPro" id="IPR016095">
    <property type="entry name" value="Ribosomal_uL1_3-a/b-sand"/>
</dbReference>
<dbReference type="InterPro" id="IPR023673">
    <property type="entry name" value="Ribosomal_uL1_CS"/>
</dbReference>
<dbReference type="NCBIfam" id="TIGR01169">
    <property type="entry name" value="rplA_bact"/>
    <property type="match status" value="1"/>
</dbReference>
<dbReference type="PANTHER" id="PTHR36427">
    <property type="entry name" value="54S RIBOSOMAL PROTEIN L1, MITOCHONDRIAL"/>
    <property type="match status" value="1"/>
</dbReference>
<dbReference type="PANTHER" id="PTHR36427:SF3">
    <property type="entry name" value="LARGE RIBOSOMAL SUBUNIT PROTEIN UL1M"/>
    <property type="match status" value="1"/>
</dbReference>
<dbReference type="Pfam" id="PF00687">
    <property type="entry name" value="Ribosomal_L1"/>
    <property type="match status" value="1"/>
</dbReference>
<dbReference type="PIRSF" id="PIRSF002155">
    <property type="entry name" value="Ribosomal_L1"/>
    <property type="match status" value="1"/>
</dbReference>
<dbReference type="SUPFAM" id="SSF56808">
    <property type="entry name" value="Ribosomal protein L1"/>
    <property type="match status" value="1"/>
</dbReference>
<dbReference type="PROSITE" id="PS01199">
    <property type="entry name" value="RIBOSOMAL_L1"/>
    <property type="match status" value="1"/>
</dbReference>
<reference key="1">
    <citation type="journal article" date="2009" name="PLoS Genet.">
        <title>Organised genome dynamics in the Escherichia coli species results in highly diverse adaptive paths.</title>
        <authorList>
            <person name="Touchon M."/>
            <person name="Hoede C."/>
            <person name="Tenaillon O."/>
            <person name="Barbe V."/>
            <person name="Baeriswyl S."/>
            <person name="Bidet P."/>
            <person name="Bingen E."/>
            <person name="Bonacorsi S."/>
            <person name="Bouchier C."/>
            <person name="Bouvet O."/>
            <person name="Calteau A."/>
            <person name="Chiapello H."/>
            <person name="Clermont O."/>
            <person name="Cruveiller S."/>
            <person name="Danchin A."/>
            <person name="Diard M."/>
            <person name="Dossat C."/>
            <person name="Karoui M.E."/>
            <person name="Frapy E."/>
            <person name="Garry L."/>
            <person name="Ghigo J.M."/>
            <person name="Gilles A.M."/>
            <person name="Johnson J."/>
            <person name="Le Bouguenec C."/>
            <person name="Lescat M."/>
            <person name="Mangenot S."/>
            <person name="Martinez-Jehanne V."/>
            <person name="Matic I."/>
            <person name="Nassif X."/>
            <person name="Oztas S."/>
            <person name="Petit M.A."/>
            <person name="Pichon C."/>
            <person name="Rouy Z."/>
            <person name="Ruf C.S."/>
            <person name="Schneider D."/>
            <person name="Tourret J."/>
            <person name="Vacherie B."/>
            <person name="Vallenet D."/>
            <person name="Medigue C."/>
            <person name="Rocha E.P.C."/>
            <person name="Denamur E."/>
        </authorList>
    </citation>
    <scope>NUCLEOTIDE SEQUENCE [LARGE SCALE GENOMIC DNA]</scope>
    <source>
        <strain>IAI39 / ExPEC</strain>
    </source>
</reference>
<keyword id="KW-0678">Repressor</keyword>
<keyword id="KW-0687">Ribonucleoprotein</keyword>
<keyword id="KW-0689">Ribosomal protein</keyword>
<keyword id="KW-0694">RNA-binding</keyword>
<keyword id="KW-0699">rRNA-binding</keyword>
<keyword id="KW-0810">Translation regulation</keyword>
<keyword id="KW-0820">tRNA-binding</keyword>
<proteinExistence type="inferred from homology"/>
<sequence>MAKLTKRMRVIREKVDATKQYDINEAIALLKELATAKFVESVDVAVNLGIDARKSDQNVRGATVLPHGTGRSVRVAVFTQGANAEAAKAAGAELVGMEDLADQIKKGEMNFDVVIASPDAMRVVGQLGQVLGPRGLMPNPKVGTVTPNVAEAVKNAKAGQVRYRNDKNGIIHTTIGKVDFDADKLKENLEALLVALKKAKPTQAKGVYIKKVSISTTMGAGVAVDQAGLSASVN</sequence>
<accession>B7NRR2</accession>
<evidence type="ECO:0000255" key="1">
    <source>
        <dbReference type="HAMAP-Rule" id="MF_01318"/>
    </source>
</evidence>
<evidence type="ECO:0000305" key="2"/>